<reference evidence="9" key="1">
    <citation type="journal article" date="2004" name="Science">
        <title>A draft sequence for the genome of the domesticated silkworm (Bombyx mori).</title>
        <authorList>
            <person name="Xia Q."/>
            <person name="Zhou Z."/>
            <person name="Lu C."/>
            <person name="Cheng D."/>
            <person name="Dai F."/>
            <person name="Li B."/>
            <person name="Zhao P."/>
            <person name="Zha X."/>
            <person name="Cheng T."/>
            <person name="Chai C."/>
            <person name="Pan G."/>
            <person name="Xu J."/>
            <person name="Liu C."/>
            <person name="Lin Y."/>
            <person name="Qian J."/>
            <person name="Hou Y."/>
            <person name="Wu Z."/>
            <person name="Li G."/>
            <person name="Pan M."/>
            <person name="Li C."/>
            <person name="Shen Y."/>
            <person name="Lan X."/>
            <person name="Yuan L."/>
            <person name="Li T."/>
            <person name="Xu H."/>
            <person name="Yang G."/>
            <person name="Wan Y."/>
            <person name="Zhu Y."/>
            <person name="Yu M."/>
            <person name="Shen W."/>
            <person name="Wu D."/>
            <person name="Xiang Z."/>
            <person name="Yu J."/>
            <person name="Wang J."/>
            <person name="Li R."/>
            <person name="Shi J."/>
            <person name="Li H."/>
            <person name="Li G."/>
            <person name="Su J."/>
            <person name="Wang X."/>
            <person name="Li G."/>
            <person name="Zhang Z."/>
            <person name="Wu Q."/>
            <person name="Li J."/>
            <person name="Zhang Q."/>
            <person name="Wei N."/>
            <person name="Xu J."/>
            <person name="Sun H."/>
            <person name="Dong L."/>
            <person name="Liu D."/>
            <person name="Zhao S."/>
            <person name="Zhao X."/>
            <person name="Meng Q."/>
            <person name="Lan F."/>
            <person name="Huang X."/>
            <person name="Li Y."/>
            <person name="Fang L."/>
            <person name="Li C."/>
            <person name="Li D."/>
            <person name="Sun Y."/>
            <person name="Zhang Z."/>
            <person name="Yang Z."/>
            <person name="Huang Y."/>
            <person name="Xi Y."/>
            <person name="Qi Q."/>
            <person name="He D."/>
            <person name="Huang H."/>
            <person name="Zhang X."/>
            <person name="Wang Z."/>
            <person name="Li W."/>
            <person name="Cao Y."/>
            <person name="Yu Y."/>
            <person name="Yu H."/>
            <person name="Li J."/>
            <person name="Ye J."/>
            <person name="Chen H."/>
            <person name="Zhou Y."/>
            <person name="Liu B."/>
            <person name="Wang J."/>
            <person name="Ye J."/>
            <person name="Ji H."/>
            <person name="Li S."/>
            <person name="Ni P."/>
            <person name="Zhang J."/>
            <person name="Zhang Y."/>
            <person name="Zheng H."/>
            <person name="Mao B."/>
            <person name="Wang W."/>
            <person name="Ye C."/>
            <person name="Li S."/>
            <person name="Wang J."/>
            <person name="Wong G.K.-S."/>
            <person name="Yang H."/>
        </authorList>
    </citation>
    <scope>NUCLEOTIDE SEQUENCE [LARGE SCALE GENOMIC DNA]</scope>
    <source>
        <strain evidence="9">p50T</strain>
    </source>
</reference>
<reference evidence="7" key="2">
    <citation type="journal article" date="2019" name="Int. J. Mol. Sci.">
        <title>Genome-Wide Analysis and Hormone Regulation of Chitin Deacetylases in Silkworm.</title>
        <authorList>
            <person name="Zhang Z."/>
            <person name="Yan J."/>
            <person name="Liu Q."/>
            <person name="Zhang Y."/>
            <person name="Gong J."/>
            <person name="Hou Y."/>
        </authorList>
    </citation>
    <scope>TISSUE SPECIFICITY</scope>
    <scope>DEVELOPMENTAL STAGE</scope>
    <scope>INDUCTION</scope>
    <scope>DISRUPTION PHENOTYPE</scope>
</reference>
<reference evidence="10 11" key="3">
    <citation type="journal article" date="2019" name="J. Biol. Chem.">
        <title>Structural and biochemical insights into the catalytic mechanisms of two insect chitin deacetylases of the carbohydrate esterase 4 family.</title>
        <authorList>
            <person name="Liu L."/>
            <person name="Zhou Y."/>
            <person name="Qu M."/>
            <person name="Qiu Y."/>
            <person name="Guo X."/>
            <person name="Zhang Y."/>
            <person name="Liu T."/>
            <person name="Yang J."/>
            <person name="Yang Q."/>
        </authorList>
    </citation>
    <scope>X-RAY CRYSTALLOGRAPHY (1.98 ANGSTROMS) OF 161-539 IN COMPLEX WITH ZINC</scope>
    <scope>FUNCTION</scope>
    <scope>CATALYTIC ACTIVITY</scope>
    <scope>ACTIVITY REGULATION</scope>
    <scope>INTERACTION WITH CPAP3-A1</scope>
    <scope>DISULFIDE BONDS</scope>
    <scope>GLYCOSYLATION AT ASN-244 AND ASN-296</scope>
    <scope>MUTAGENESIS OF ASP-205</scope>
</reference>
<accession>H9J9M0</accession>
<feature type="signal peptide" evidence="1">
    <location>
        <begin position="1"/>
        <end position="23"/>
    </location>
</feature>
<feature type="chain" id="PRO_5003621239" description="Chitin deacetylase 1" evidence="1">
    <location>
        <begin position="24"/>
        <end position="539"/>
    </location>
</feature>
<feature type="domain" description="Chitin-binding type-2" evidence="3">
    <location>
        <begin position="42"/>
        <end position="104"/>
    </location>
</feature>
<feature type="domain" description="LDL-receptor class A" evidence="2">
    <location>
        <begin position="121"/>
        <end position="157"/>
    </location>
</feature>
<feature type="binding site" evidence="4 11">
    <location>
        <position position="206"/>
    </location>
    <ligand>
        <name>Zn(2+)</name>
        <dbReference type="ChEBI" id="CHEBI:29105"/>
    </ligand>
</feature>
<feature type="binding site" evidence="4 10 11">
    <location>
        <position position="261"/>
    </location>
    <ligand>
        <name>Zn(2+)</name>
        <dbReference type="ChEBI" id="CHEBI:29105"/>
    </ligand>
</feature>
<feature type="binding site" evidence="4 10 11">
    <location>
        <position position="265"/>
    </location>
    <ligand>
        <name>Zn(2+)</name>
        <dbReference type="ChEBI" id="CHEBI:29105"/>
    </ligand>
</feature>
<feature type="glycosylation site" description="N-linked (GlcNAc...) asparagine" evidence="4 10 11">
    <location>
        <position position="244"/>
    </location>
</feature>
<feature type="glycosylation site" description="N-linked (GlcNAc...) asparagine" evidence="4 10 11">
    <location>
        <position position="296"/>
    </location>
</feature>
<feature type="disulfide bond" evidence="3">
    <location>
        <begin position="80"/>
        <end position="93"/>
    </location>
</feature>
<feature type="disulfide bond" evidence="2">
    <location>
        <begin position="122"/>
        <end position="134"/>
    </location>
</feature>
<feature type="disulfide bond" evidence="2">
    <location>
        <begin position="129"/>
        <end position="147"/>
    </location>
</feature>
<feature type="disulfide bond" evidence="2">
    <location>
        <begin position="141"/>
        <end position="156"/>
    </location>
</feature>
<feature type="disulfide bond" evidence="4 10 11">
    <location>
        <begin position="168"/>
        <end position="180"/>
    </location>
</feature>
<feature type="disulfide bond" evidence="4 10 11">
    <location>
        <begin position="173"/>
        <end position="178"/>
    </location>
</feature>
<feature type="disulfide bond" evidence="4 10 11">
    <location>
        <begin position="230"/>
        <end position="489"/>
    </location>
</feature>
<feature type="disulfide bond" evidence="4 10 11">
    <location>
        <begin position="354"/>
        <end position="361"/>
    </location>
</feature>
<feature type="disulfide bond" evidence="4 10 11">
    <location>
        <begin position="391"/>
        <end position="397"/>
    </location>
</feature>
<feature type="disulfide bond" evidence="4 10 11">
    <location>
        <begin position="497"/>
        <end position="520"/>
    </location>
</feature>
<feature type="disulfide bond" evidence="4 10 11">
    <location>
        <begin position="503"/>
        <end position="523"/>
    </location>
</feature>
<feature type="mutagenesis site" description="Abolishes catalytic activity." evidence="4">
    <original>D</original>
    <variation>S</variation>
    <location>
        <position position="205"/>
    </location>
</feature>
<feature type="turn" evidence="13">
    <location>
        <begin position="170"/>
        <end position="172"/>
    </location>
</feature>
<feature type="turn" evidence="13">
    <location>
        <begin position="175"/>
        <end position="177"/>
    </location>
</feature>
<feature type="strand" evidence="13">
    <location>
        <begin position="182"/>
        <end position="184"/>
    </location>
</feature>
<feature type="helix" evidence="13">
    <location>
        <begin position="188"/>
        <end position="190"/>
    </location>
</feature>
<feature type="helix" evidence="13">
    <location>
        <begin position="193"/>
        <end position="195"/>
    </location>
</feature>
<feature type="strand" evidence="13">
    <location>
        <begin position="198"/>
        <end position="206"/>
    </location>
</feature>
<feature type="turn" evidence="13">
    <location>
        <begin position="210"/>
        <end position="212"/>
    </location>
</feature>
<feature type="helix" evidence="13">
    <location>
        <begin position="213"/>
        <end position="219"/>
    </location>
</feature>
<feature type="strand" evidence="12">
    <location>
        <begin position="229"/>
        <end position="231"/>
    </location>
</feature>
<feature type="strand" evidence="13">
    <location>
        <begin position="235"/>
        <end position="238"/>
    </location>
</feature>
<feature type="helix" evidence="13">
    <location>
        <begin position="245"/>
        <end position="253"/>
    </location>
</feature>
<feature type="strand" evidence="13">
    <location>
        <begin position="257"/>
        <end position="260"/>
    </location>
</feature>
<feature type="helix" evidence="13">
    <location>
        <begin position="269"/>
        <end position="273"/>
    </location>
</feature>
<feature type="helix" evidence="13">
    <location>
        <begin position="277"/>
        <end position="294"/>
    </location>
</feature>
<feature type="helix" evidence="13">
    <location>
        <begin position="308"/>
        <end position="310"/>
    </location>
</feature>
<feature type="helix" evidence="13">
    <location>
        <begin position="314"/>
        <end position="323"/>
    </location>
</feature>
<feature type="turn" evidence="12">
    <location>
        <begin position="382"/>
        <end position="384"/>
    </location>
</feature>
<feature type="strand" evidence="13">
    <location>
        <begin position="391"/>
        <end position="393"/>
    </location>
</feature>
<feature type="helix" evidence="13">
    <location>
        <begin position="394"/>
        <end position="396"/>
    </location>
</feature>
<feature type="helix" evidence="13">
    <location>
        <begin position="403"/>
        <end position="418"/>
    </location>
</feature>
<feature type="turn" evidence="13">
    <location>
        <begin position="419"/>
        <end position="421"/>
    </location>
</feature>
<feature type="strand" evidence="13">
    <location>
        <begin position="425"/>
        <end position="430"/>
    </location>
</feature>
<feature type="helix" evidence="13">
    <location>
        <begin position="431"/>
        <end position="436"/>
    </location>
</feature>
<feature type="helix" evidence="13">
    <location>
        <begin position="438"/>
        <end position="454"/>
    </location>
</feature>
<feature type="strand" evidence="13">
    <location>
        <begin position="456"/>
        <end position="460"/>
    </location>
</feature>
<feature type="helix" evidence="13">
    <location>
        <begin position="463"/>
        <end position="471"/>
    </location>
</feature>
<feature type="helix" evidence="13">
    <location>
        <begin position="476"/>
        <end position="479"/>
    </location>
</feature>
<feature type="helix" evidence="13">
    <location>
        <begin position="483"/>
        <end position="486"/>
    </location>
</feature>
<feature type="turn" evidence="13">
    <location>
        <begin position="487"/>
        <end position="490"/>
    </location>
</feature>
<feature type="strand" evidence="13">
    <location>
        <begin position="501"/>
        <end position="505"/>
    </location>
</feature>
<feature type="strand" evidence="13">
    <location>
        <begin position="515"/>
        <end position="521"/>
    </location>
</feature>
<organism evidence="9">
    <name type="scientific">Bombyx mori</name>
    <name type="common">Silk moth</name>
    <dbReference type="NCBI Taxonomy" id="7091"/>
    <lineage>
        <taxon>Eukaryota</taxon>
        <taxon>Metazoa</taxon>
        <taxon>Ecdysozoa</taxon>
        <taxon>Arthropoda</taxon>
        <taxon>Hexapoda</taxon>
        <taxon>Insecta</taxon>
        <taxon>Pterygota</taxon>
        <taxon>Neoptera</taxon>
        <taxon>Endopterygota</taxon>
        <taxon>Lepidoptera</taxon>
        <taxon>Glossata</taxon>
        <taxon>Ditrysia</taxon>
        <taxon>Bombycoidea</taxon>
        <taxon>Bombycidae</taxon>
        <taxon>Bombycinae</taxon>
        <taxon>Bombyx</taxon>
    </lineage>
</organism>
<comment type="function">
    <text evidence="4">Hydrolyzes the N-acetamido groups of N-acetyl-D-glucosamine residues in chitin.</text>
</comment>
<comment type="catalytic activity">
    <reaction evidence="4">
        <text>[(1-&gt;4)-N-acetyl-beta-D-glucosaminyl](n) + n H2O = chitosan + n acetate</text>
        <dbReference type="Rhea" id="RHEA:10464"/>
        <dbReference type="Rhea" id="RHEA-COMP:9593"/>
        <dbReference type="Rhea" id="RHEA-COMP:9597"/>
        <dbReference type="ChEBI" id="CHEBI:15377"/>
        <dbReference type="ChEBI" id="CHEBI:17029"/>
        <dbReference type="ChEBI" id="CHEBI:30089"/>
        <dbReference type="ChEBI" id="CHEBI:57704"/>
        <dbReference type="EC" id="3.5.1.41"/>
    </reaction>
</comment>
<comment type="cofactor">
    <cofactor evidence="8">
        <name>Zn(2+)</name>
        <dbReference type="ChEBI" id="CHEBI:29105"/>
    </cofactor>
</comment>
<comment type="activity regulation">
    <text evidence="4">Binding to the accessory protein CPAP3-A1 is essential for chitinase activity.</text>
</comment>
<comment type="subunit">
    <text evidence="4">Interacts with CPAP3-A1.</text>
</comment>
<comment type="subcellular location">
    <subcellularLocation>
        <location evidence="7">Secreted</location>
    </subcellularLocation>
</comment>
<comment type="tissue specificity">
    <text evidence="5">Highly expressed in epidermis and head. Moderate expression levels in fat body, Malpighian tubule, testis and midgut. Low expression in silk gland and ovary.</text>
</comment>
<comment type="developmental stage">
    <text evidence="5">Shows highest expression during pupal stages, with a peak during pupal day 1. Has relatively low expression during larval development.</text>
</comment>
<comment type="induction">
    <text evidence="5">Up-regulated in response to 20-hydroxyecdysone (20E) and juvenile hormone analog. Also up-regulated in response to the transcription factors BRC-Z2 and POUM2.</text>
</comment>
<comment type="disruption phenotype">
    <text evidence="5">RNAi-mediated knockdown results in delayed pupation.</text>
</comment>
<comment type="similarity">
    <text evidence="7">Belongs to the carbohydrate esterase 4 (CE4) family.</text>
</comment>
<comment type="caution">
    <text evidence="4">Has no detectable chitin esterase activity in purified form. Enzymatic activity is detected in the presence of CPAP3-A1, or B.mori molting fluid. However, it is unclear whether this protein functions as a chitin esterase in vivo.</text>
</comment>
<protein>
    <recommendedName>
        <fullName evidence="6">Chitin deacetylase 1</fullName>
        <shortName evidence="6">BmCDA1</shortName>
        <ecNumber evidence="4">3.5.1.41</ecNumber>
    </recommendedName>
</protein>
<proteinExistence type="evidence at protein level"/>
<sequence length="539" mass="61429">MARYARVATLAACLLFACALADGHRWRRQADETAKKDESLEQELCKDKDAGEWFRLVAGEGDNCRDVIQCTASGIQAIRCPAGLFFDIEKQTCDWKDAVKNCKLKNKERKIKPLLYTEEPLCQDGFLACGDSTCIERGLFCNGEKDCGDGSDENSCDIDNDPNRAPPCDSSQCVLPDCFCSEDGTVIPGDLPARDVPQMITITFDDAINNNNIELYKEIFNGKRKNPNGCDIKATYFVSHKYTNYSAVQETHRKGHEIAVHSITHNDDERFWSNATVDDWGKEMAGMRVIIEKFSNITDNSVVGVRAPYLRVGGNNQFTMMEEQAFLYDSTITAPLSNPRLCPYTMYFRMPHRCHGNLQSCPTRSHAVWEMVMNELDRREDPSNDEYLPGCAMVDSCSNILTGDQFYNFLNHNFDRHYEQNRAPLGLYFHAAWLKNNPEFLEAFLYWIDEILQSHNDVYFVTMTQVIQWVQNPRTVTEAKNFEPWREKCSVEGNPACWVPHSCKLTSKEVPGETINLQTCLRCPVNYPWLNDPTGDGHY</sequence>
<dbReference type="EC" id="3.5.1.41" evidence="4"/>
<dbReference type="EMBL" id="BABH01005057">
    <property type="status" value="NOT_ANNOTATED_CDS"/>
    <property type="molecule type" value="Genomic_DNA"/>
</dbReference>
<dbReference type="EMBL" id="BABH01005058">
    <property type="status" value="NOT_ANNOTATED_CDS"/>
    <property type="molecule type" value="Genomic_DNA"/>
</dbReference>
<dbReference type="RefSeq" id="XP_004929283.1">
    <property type="nucleotide sequence ID" value="XM_004929226.2"/>
</dbReference>
<dbReference type="PDB" id="5ZNS">
    <property type="method" value="X-ray"/>
    <property type="resolution" value="2.40 A"/>
    <property type="chains" value="A=161-539"/>
</dbReference>
<dbReference type="PDB" id="5ZNT">
    <property type="method" value="X-ray"/>
    <property type="resolution" value="1.98 A"/>
    <property type="chains" value="A=161-539"/>
</dbReference>
<dbReference type="PDBsum" id="5ZNS"/>
<dbReference type="PDBsum" id="5ZNT"/>
<dbReference type="SMR" id="H9J9M0"/>
<dbReference type="STRING" id="7091.H9J9M0"/>
<dbReference type="GlyCosmos" id="H9J9M0">
    <property type="glycosylation" value="2 sites, No reported glycans"/>
</dbReference>
<dbReference type="iPTMnet" id="H9J9M0"/>
<dbReference type="PaxDb" id="7091-BGIBMGA006213-TA"/>
<dbReference type="GeneID" id="101740647"/>
<dbReference type="KEGG" id="bmor:101740647"/>
<dbReference type="CTD" id="40150"/>
<dbReference type="eggNOG" id="ENOG502QQP5">
    <property type="taxonomic scope" value="Eukaryota"/>
</dbReference>
<dbReference type="HOGENOM" id="CLU_022576_1_0_1"/>
<dbReference type="InParanoid" id="H9J9M0"/>
<dbReference type="OMA" id="TCDWKDS"/>
<dbReference type="Proteomes" id="UP000005204">
    <property type="component" value="Unassembled WGS sequence"/>
</dbReference>
<dbReference type="GO" id="GO:0005615">
    <property type="term" value="C:extracellular space"/>
    <property type="evidence" value="ECO:0000305"/>
    <property type="project" value="UniProtKB"/>
</dbReference>
<dbReference type="GO" id="GO:0008061">
    <property type="term" value="F:chitin binding"/>
    <property type="evidence" value="ECO:0007669"/>
    <property type="project" value="InterPro"/>
</dbReference>
<dbReference type="GO" id="GO:0004099">
    <property type="term" value="F:chitin deacetylase activity"/>
    <property type="evidence" value="ECO:0000314"/>
    <property type="project" value="UniProtKB"/>
</dbReference>
<dbReference type="GO" id="GO:0008270">
    <property type="term" value="F:zinc ion binding"/>
    <property type="evidence" value="ECO:0000314"/>
    <property type="project" value="UniProtKB"/>
</dbReference>
<dbReference type="GO" id="GO:0006032">
    <property type="term" value="P:chitin catabolic process"/>
    <property type="evidence" value="ECO:0007669"/>
    <property type="project" value="UniProtKB-KW"/>
</dbReference>
<dbReference type="GO" id="GO:0000272">
    <property type="term" value="P:polysaccharide catabolic process"/>
    <property type="evidence" value="ECO:0000314"/>
    <property type="project" value="UniProtKB"/>
</dbReference>
<dbReference type="CDD" id="cd10974">
    <property type="entry name" value="CE4_CDA_like_1"/>
    <property type="match status" value="1"/>
</dbReference>
<dbReference type="CDD" id="cd00112">
    <property type="entry name" value="LDLa"/>
    <property type="match status" value="1"/>
</dbReference>
<dbReference type="FunFam" id="3.20.20.370:FF:000003">
    <property type="entry name" value="CLUMA_CG003232, isoform B"/>
    <property type="match status" value="1"/>
</dbReference>
<dbReference type="Gene3D" id="2.170.140.10">
    <property type="entry name" value="Chitin binding domain"/>
    <property type="match status" value="1"/>
</dbReference>
<dbReference type="Gene3D" id="3.20.20.370">
    <property type="entry name" value="Glycoside hydrolase/deacetylase"/>
    <property type="match status" value="1"/>
</dbReference>
<dbReference type="Gene3D" id="4.10.400.10">
    <property type="entry name" value="Low-density Lipoprotein Receptor"/>
    <property type="match status" value="1"/>
</dbReference>
<dbReference type="InterPro" id="IPR052740">
    <property type="entry name" value="CE4"/>
</dbReference>
<dbReference type="InterPro" id="IPR002557">
    <property type="entry name" value="Chitin-bd_dom"/>
</dbReference>
<dbReference type="InterPro" id="IPR036508">
    <property type="entry name" value="Chitin-bd_dom_sf"/>
</dbReference>
<dbReference type="InterPro" id="IPR011330">
    <property type="entry name" value="Glyco_hydro/deAcase_b/a-brl"/>
</dbReference>
<dbReference type="InterPro" id="IPR036055">
    <property type="entry name" value="LDL_receptor-like_sf"/>
</dbReference>
<dbReference type="InterPro" id="IPR023415">
    <property type="entry name" value="LDLR_class-A_CS"/>
</dbReference>
<dbReference type="InterPro" id="IPR002172">
    <property type="entry name" value="LDrepeatLR_classA_rpt"/>
</dbReference>
<dbReference type="InterPro" id="IPR002509">
    <property type="entry name" value="NODB_dom"/>
</dbReference>
<dbReference type="PANTHER" id="PTHR45985">
    <property type="match status" value="1"/>
</dbReference>
<dbReference type="PANTHER" id="PTHR45985:SF6">
    <property type="entry name" value="FI03450P"/>
    <property type="match status" value="1"/>
</dbReference>
<dbReference type="Pfam" id="PF01607">
    <property type="entry name" value="CBM_14"/>
    <property type="match status" value="1"/>
</dbReference>
<dbReference type="Pfam" id="PF00057">
    <property type="entry name" value="Ldl_recept_a"/>
    <property type="match status" value="1"/>
</dbReference>
<dbReference type="Pfam" id="PF01522">
    <property type="entry name" value="Polysacc_deac_1"/>
    <property type="match status" value="1"/>
</dbReference>
<dbReference type="SMART" id="SM00494">
    <property type="entry name" value="ChtBD2"/>
    <property type="match status" value="1"/>
</dbReference>
<dbReference type="SMART" id="SM00192">
    <property type="entry name" value="LDLa"/>
    <property type="match status" value="1"/>
</dbReference>
<dbReference type="SUPFAM" id="SSF88713">
    <property type="entry name" value="Glycoside hydrolase/deacetylase"/>
    <property type="match status" value="1"/>
</dbReference>
<dbReference type="SUPFAM" id="SSF57625">
    <property type="entry name" value="Invertebrate chitin-binding proteins"/>
    <property type="match status" value="1"/>
</dbReference>
<dbReference type="SUPFAM" id="SSF57424">
    <property type="entry name" value="LDL receptor-like module"/>
    <property type="match status" value="1"/>
</dbReference>
<dbReference type="PROSITE" id="PS50940">
    <property type="entry name" value="CHIT_BIND_II"/>
    <property type="match status" value="1"/>
</dbReference>
<dbReference type="PROSITE" id="PS01209">
    <property type="entry name" value="LDLRA_1"/>
    <property type="match status" value="1"/>
</dbReference>
<dbReference type="PROSITE" id="PS50068">
    <property type="entry name" value="LDLRA_2"/>
    <property type="match status" value="1"/>
</dbReference>
<evidence type="ECO:0000255" key="1"/>
<evidence type="ECO:0000255" key="2">
    <source>
        <dbReference type="PROSITE-ProRule" id="PRU00124"/>
    </source>
</evidence>
<evidence type="ECO:0000255" key="3">
    <source>
        <dbReference type="PROSITE-ProRule" id="PRU00144"/>
    </source>
</evidence>
<evidence type="ECO:0000269" key="4">
    <source>
    </source>
</evidence>
<evidence type="ECO:0000269" key="5">
    <source>
    </source>
</evidence>
<evidence type="ECO:0000303" key="6">
    <source>
    </source>
</evidence>
<evidence type="ECO:0000305" key="7"/>
<evidence type="ECO:0000305" key="8">
    <source>
    </source>
</evidence>
<evidence type="ECO:0000312" key="9">
    <source>
        <dbReference type="Proteomes" id="UP000005204"/>
    </source>
</evidence>
<evidence type="ECO:0007744" key="10">
    <source>
        <dbReference type="PDB" id="5ZNS"/>
    </source>
</evidence>
<evidence type="ECO:0007744" key="11">
    <source>
        <dbReference type="PDB" id="5ZNT"/>
    </source>
</evidence>
<evidence type="ECO:0007829" key="12">
    <source>
        <dbReference type="PDB" id="5ZNS"/>
    </source>
</evidence>
<evidence type="ECO:0007829" key="13">
    <source>
        <dbReference type="PDB" id="5ZNT"/>
    </source>
</evidence>
<keyword id="KW-0002">3D-structure</keyword>
<keyword id="KW-0119">Carbohydrate metabolism</keyword>
<keyword id="KW-0146">Chitin degradation</keyword>
<keyword id="KW-1015">Disulfide bond</keyword>
<keyword id="KW-0325">Glycoprotein</keyword>
<keyword id="KW-0378">Hydrolase</keyword>
<keyword id="KW-0479">Metal-binding</keyword>
<keyword id="KW-0624">Polysaccharide degradation</keyword>
<keyword id="KW-1185">Reference proteome</keyword>
<keyword id="KW-0964">Secreted</keyword>
<keyword id="KW-0732">Signal</keyword>
<keyword id="KW-0862">Zinc</keyword>
<name>CDA1_BOMMO</name>
<gene>
    <name evidence="6" type="primary">CDA1</name>
</gene>